<reference key="1">
    <citation type="journal article" date="2006" name="J. Bacteriol.">
        <title>Complete genome sequence of Yersinia pestis strains Antiqua and Nepal516: evidence of gene reduction in an emerging pathogen.</title>
        <authorList>
            <person name="Chain P.S.G."/>
            <person name="Hu P."/>
            <person name="Malfatti S.A."/>
            <person name="Radnedge L."/>
            <person name="Larimer F."/>
            <person name="Vergez L.M."/>
            <person name="Worsham P."/>
            <person name="Chu M.C."/>
            <person name="Andersen G.L."/>
        </authorList>
    </citation>
    <scope>NUCLEOTIDE SEQUENCE [LARGE SCALE GENOMIC DNA]</scope>
    <source>
        <strain>Nepal516</strain>
    </source>
</reference>
<reference key="2">
    <citation type="submission" date="2009-04" db="EMBL/GenBank/DDBJ databases">
        <title>Yersinia pestis Nepal516A whole genome shotgun sequencing project.</title>
        <authorList>
            <person name="Plunkett G. III"/>
            <person name="Anderson B.D."/>
            <person name="Baumler D.J."/>
            <person name="Burland V."/>
            <person name="Cabot E.L."/>
            <person name="Glasner J.D."/>
            <person name="Mau B."/>
            <person name="Neeno-Eckwall E."/>
            <person name="Perna N.T."/>
            <person name="Munk A.C."/>
            <person name="Tapia R."/>
            <person name="Green L.D."/>
            <person name="Rogers Y.C."/>
            <person name="Detter J.C."/>
            <person name="Bruce D.C."/>
            <person name="Brettin T.S."/>
        </authorList>
    </citation>
    <scope>NUCLEOTIDE SEQUENCE [LARGE SCALE GENOMIC DNA]</scope>
    <source>
        <strain>Nepal516</strain>
    </source>
</reference>
<accession>Q1CJ34</accession>
<accession>C4GSW0</accession>
<keyword id="KW-0997">Cell inner membrane</keyword>
<keyword id="KW-1003">Cell membrane</keyword>
<keyword id="KW-0472">Membrane</keyword>
<keyword id="KW-0812">Transmembrane</keyword>
<keyword id="KW-1133">Transmembrane helix</keyword>
<evidence type="ECO:0000255" key="1">
    <source>
        <dbReference type="HAMAP-Rule" id="MF_01067"/>
    </source>
</evidence>
<dbReference type="EMBL" id="CP000305">
    <property type="protein sequence ID" value="ABG17996.1"/>
    <property type="molecule type" value="Genomic_DNA"/>
</dbReference>
<dbReference type="EMBL" id="ACNQ01000009">
    <property type="protein sequence ID" value="EEO77120.1"/>
    <property type="molecule type" value="Genomic_DNA"/>
</dbReference>
<dbReference type="RefSeq" id="WP_002210639.1">
    <property type="nucleotide sequence ID" value="NZ_ACNQ01000009.1"/>
</dbReference>
<dbReference type="KEGG" id="ypn:YPN_1667"/>
<dbReference type="HOGENOM" id="CLU_073287_0_0_6"/>
<dbReference type="Proteomes" id="UP000008936">
    <property type="component" value="Chromosome"/>
</dbReference>
<dbReference type="GO" id="GO:0005886">
    <property type="term" value="C:plasma membrane"/>
    <property type="evidence" value="ECO:0007669"/>
    <property type="project" value="UniProtKB-SubCell"/>
</dbReference>
<dbReference type="HAMAP" id="MF_01067">
    <property type="entry name" value="UPF0259"/>
    <property type="match status" value="1"/>
</dbReference>
<dbReference type="InterPro" id="IPR009627">
    <property type="entry name" value="UPF0259"/>
</dbReference>
<dbReference type="NCBIfam" id="NF002774">
    <property type="entry name" value="PRK02868.1"/>
    <property type="match status" value="1"/>
</dbReference>
<dbReference type="Pfam" id="PF06790">
    <property type="entry name" value="UPF0259"/>
    <property type="match status" value="1"/>
</dbReference>
<proteinExistence type="inferred from homology"/>
<protein>
    <recommendedName>
        <fullName evidence="1">UPF0259 membrane protein YPN_1667</fullName>
    </recommendedName>
</protein>
<sequence>MPITANTLYRDSFNFLRNQIAAILLLALLTAFITVMLNQTFMPASEQLSILSIPENDITSSGNLSISEIVSQMTPEQQMVLLRVSAVATFSALVGNVLLVGGLLTLIAMVSQGRRVSALQAIGLSLPILPRLLVLMFISTLVIQLGLTFFIVPGVAIAIALSLSPIIVTNERMGIFAAMKASAQLAFANVRLIVPAMMLWIAVKLLLLFLISRFTVLPPTIATIVLSTLSNLASALLLVYLFRLYMLLRPVSLDKQ</sequence>
<organism>
    <name type="scientific">Yersinia pestis bv. Antiqua (strain Nepal516)</name>
    <dbReference type="NCBI Taxonomy" id="377628"/>
    <lineage>
        <taxon>Bacteria</taxon>
        <taxon>Pseudomonadati</taxon>
        <taxon>Pseudomonadota</taxon>
        <taxon>Gammaproteobacteria</taxon>
        <taxon>Enterobacterales</taxon>
        <taxon>Yersiniaceae</taxon>
        <taxon>Yersinia</taxon>
    </lineage>
</organism>
<comment type="subcellular location">
    <subcellularLocation>
        <location evidence="1">Cell inner membrane</location>
        <topology evidence="1">Multi-pass membrane protein</topology>
    </subcellularLocation>
</comment>
<comment type="similarity">
    <text evidence="1">Belongs to the UPF0259 family.</text>
</comment>
<gene>
    <name type="ordered locus">YPN_1667</name>
    <name type="ORF">YP516_1855</name>
</gene>
<name>Y1667_YERPN</name>
<feature type="chain" id="PRO_1000064540" description="UPF0259 membrane protein YPN_1667">
    <location>
        <begin position="1"/>
        <end position="256"/>
    </location>
</feature>
<feature type="transmembrane region" description="Helical" evidence="1">
    <location>
        <begin position="20"/>
        <end position="40"/>
    </location>
</feature>
<feature type="transmembrane region" description="Helical" evidence="1">
    <location>
        <begin position="90"/>
        <end position="110"/>
    </location>
</feature>
<feature type="transmembrane region" description="Helical" evidence="1">
    <location>
        <begin position="118"/>
        <end position="138"/>
    </location>
</feature>
<feature type="transmembrane region" description="Helical" evidence="1">
    <location>
        <begin position="141"/>
        <end position="161"/>
    </location>
</feature>
<feature type="transmembrane region" description="Helical" evidence="1">
    <location>
        <begin position="192"/>
        <end position="212"/>
    </location>
</feature>
<feature type="transmembrane region" description="Helical" evidence="1">
    <location>
        <begin position="221"/>
        <end position="241"/>
    </location>
</feature>